<sequence length="338" mass="39582">MKCLVCCSYASSRNFGALSCSACKMFFTRATKNYAKFTCKYDKKCFESFTILPKCQFCRFKKCLEIGMRFSEPKQQLFNLNNSVDQDLIILLGNLAVKDGVHYSNFLNFYSLEDPSMDDILADRSRMKLMKRTLEIKTKSHEWTFLGSYYKIAQFLDFDFVKTMSLADRKILFSYNTLRMGSLSRSMRTYLDKRDCLMTPSGDDLFSPAVRGLFDKTPEIINRILCQVVGRLMEIKITYEEYLLLIMIVFCNPSISHELSDSARETLSKYQNMYASFLFRFCQLKNQHKAPTRFNDILSICNVNNKNVEDYCFVHMMFQCMVPEFKFKKLVNDIIIRS</sequence>
<keyword id="KW-0238">DNA-binding</keyword>
<keyword id="KW-0479">Metal-binding</keyword>
<keyword id="KW-0539">Nucleus</keyword>
<keyword id="KW-0675">Receptor</keyword>
<keyword id="KW-1185">Reference proteome</keyword>
<keyword id="KW-0804">Transcription</keyword>
<keyword id="KW-0805">Transcription regulation</keyword>
<keyword id="KW-0862">Zinc</keyword>
<keyword id="KW-0863">Zinc-finger</keyword>
<dbReference type="EMBL" id="AF273797">
    <property type="protein sequence ID" value="AAG15146.1"/>
    <property type="molecule type" value="Transcribed_RNA"/>
</dbReference>
<dbReference type="EMBL" id="Z83233">
    <property type="protein sequence ID" value="CAB05761.1"/>
    <property type="molecule type" value="Genomic_DNA"/>
</dbReference>
<dbReference type="PIR" id="T23365">
    <property type="entry name" value="T23365"/>
</dbReference>
<dbReference type="RefSeq" id="NP_506899.1">
    <property type="nucleotide sequence ID" value="NM_074498.4"/>
</dbReference>
<dbReference type="SMR" id="O17928"/>
<dbReference type="FunCoup" id="O17928">
    <property type="interactions" value="5"/>
</dbReference>
<dbReference type="STRING" id="6239.K06B4.2.1"/>
<dbReference type="PaxDb" id="6239-K06B4.2"/>
<dbReference type="EnsemblMetazoa" id="K06B4.2.1">
    <property type="protein sequence ID" value="K06B4.2.1"/>
    <property type="gene ID" value="WBGene00003642"/>
</dbReference>
<dbReference type="GeneID" id="3565623"/>
<dbReference type="KEGG" id="cel:CELE_K06B4.2"/>
<dbReference type="UCSC" id="K06B4.2">
    <property type="organism name" value="c. elegans"/>
</dbReference>
<dbReference type="AGR" id="WB:WBGene00003642"/>
<dbReference type="CTD" id="3565623"/>
<dbReference type="WormBase" id="K06B4.2">
    <property type="protein sequence ID" value="CE11784"/>
    <property type="gene ID" value="WBGene00003642"/>
    <property type="gene designation" value="nhr-52"/>
</dbReference>
<dbReference type="eggNOG" id="KOG3575">
    <property type="taxonomic scope" value="Eukaryota"/>
</dbReference>
<dbReference type="GeneTree" id="ENSGT00970000195839"/>
<dbReference type="HOGENOM" id="CLU_007368_3_0_1"/>
<dbReference type="InParanoid" id="O17928"/>
<dbReference type="OMA" id="TKSHEWT"/>
<dbReference type="OrthoDB" id="4247958at33208"/>
<dbReference type="PhylomeDB" id="O17928"/>
<dbReference type="PRO" id="PR:O17928"/>
<dbReference type="Proteomes" id="UP000001940">
    <property type="component" value="Chromosome V"/>
</dbReference>
<dbReference type="Bgee" id="WBGene00003642">
    <property type="expression patterns" value="Expressed in pharyngeal muscle cell (C elegans)"/>
</dbReference>
<dbReference type="GO" id="GO:0005634">
    <property type="term" value="C:nucleus"/>
    <property type="evidence" value="ECO:0007669"/>
    <property type="project" value="UniProtKB-SubCell"/>
</dbReference>
<dbReference type="GO" id="GO:0003700">
    <property type="term" value="F:DNA-binding transcription factor activity"/>
    <property type="evidence" value="ECO:0007669"/>
    <property type="project" value="InterPro"/>
</dbReference>
<dbReference type="GO" id="GO:0043565">
    <property type="term" value="F:sequence-specific DNA binding"/>
    <property type="evidence" value="ECO:0007669"/>
    <property type="project" value="InterPro"/>
</dbReference>
<dbReference type="GO" id="GO:0008270">
    <property type="term" value="F:zinc ion binding"/>
    <property type="evidence" value="ECO:0007669"/>
    <property type="project" value="UniProtKB-KW"/>
</dbReference>
<dbReference type="Gene3D" id="3.30.50.10">
    <property type="entry name" value="Erythroid Transcription Factor GATA-1, subunit A"/>
    <property type="match status" value="1"/>
</dbReference>
<dbReference type="Gene3D" id="1.10.565.10">
    <property type="entry name" value="Retinoid X Receptor"/>
    <property type="match status" value="1"/>
</dbReference>
<dbReference type="InterPro" id="IPR035500">
    <property type="entry name" value="NHR-like_dom_sf"/>
</dbReference>
<dbReference type="InterPro" id="IPR000536">
    <property type="entry name" value="Nucl_hrmn_rcpt_lig-bd"/>
</dbReference>
<dbReference type="InterPro" id="IPR001628">
    <property type="entry name" value="Znf_hrmn_rcpt"/>
</dbReference>
<dbReference type="InterPro" id="IPR013088">
    <property type="entry name" value="Znf_NHR/GATA"/>
</dbReference>
<dbReference type="PANTHER" id="PTHR45886:SF2">
    <property type="entry name" value="NUCLEAR HORMONE RECEPTOR FAMILY-RELATED"/>
    <property type="match status" value="1"/>
</dbReference>
<dbReference type="PANTHER" id="PTHR45886">
    <property type="entry name" value="NUCLEAR HORMONE RECEPTOR FAMILY-RELATED-RELATED"/>
    <property type="match status" value="1"/>
</dbReference>
<dbReference type="Pfam" id="PF00104">
    <property type="entry name" value="Hormone_recep"/>
    <property type="match status" value="1"/>
</dbReference>
<dbReference type="Pfam" id="PF00105">
    <property type="entry name" value="zf-C4"/>
    <property type="match status" value="1"/>
</dbReference>
<dbReference type="PRINTS" id="PR00047">
    <property type="entry name" value="STROIDFINGER"/>
</dbReference>
<dbReference type="SMART" id="SM00430">
    <property type="entry name" value="HOLI"/>
    <property type="match status" value="1"/>
</dbReference>
<dbReference type="SMART" id="SM00399">
    <property type="entry name" value="ZnF_C4"/>
    <property type="match status" value="1"/>
</dbReference>
<dbReference type="SUPFAM" id="SSF57716">
    <property type="entry name" value="Glucocorticoid receptor-like (DNA-binding domain)"/>
    <property type="match status" value="1"/>
</dbReference>
<dbReference type="SUPFAM" id="SSF48508">
    <property type="entry name" value="Nuclear receptor ligand-binding domain"/>
    <property type="match status" value="1"/>
</dbReference>
<dbReference type="PROSITE" id="PS51843">
    <property type="entry name" value="NR_LBD"/>
    <property type="match status" value="1"/>
</dbReference>
<dbReference type="PROSITE" id="PS00031">
    <property type="entry name" value="NUCLEAR_REC_DBD_1"/>
    <property type="match status" value="1"/>
</dbReference>
<dbReference type="PROSITE" id="PS51030">
    <property type="entry name" value="NUCLEAR_REC_DBD_2"/>
    <property type="match status" value="1"/>
</dbReference>
<accession>O17928</accession>
<name>NHR52_CAEEL</name>
<feature type="chain" id="PRO_0000053786" description="Nuclear hormone receptor family member nhr-52">
    <location>
        <begin position="1"/>
        <end position="338"/>
    </location>
</feature>
<feature type="domain" description="NR LBD" evidence="2">
    <location>
        <begin position="98"/>
        <end position="337"/>
    </location>
</feature>
<feature type="DNA-binding region" description="Nuclear receptor" evidence="1">
    <location>
        <begin position="1"/>
        <end position="75"/>
    </location>
</feature>
<feature type="zinc finger region" description="NR C4-type" evidence="1">
    <location>
        <begin position="3"/>
        <end position="23"/>
    </location>
</feature>
<feature type="zinc finger region" description="NR C4-type" evidence="1">
    <location>
        <begin position="39"/>
        <end position="63"/>
    </location>
</feature>
<protein>
    <recommendedName>
        <fullName>Nuclear hormone receptor family member nhr-52</fullName>
    </recommendedName>
</protein>
<comment type="function">
    <text>Orphan nuclear receptor.</text>
</comment>
<comment type="subcellular location">
    <subcellularLocation>
        <location evidence="1">Nucleus</location>
    </subcellularLocation>
</comment>
<comment type="similarity">
    <text evidence="3">Belongs to the nuclear hormone receptor family.</text>
</comment>
<evidence type="ECO:0000255" key="1">
    <source>
        <dbReference type="PROSITE-ProRule" id="PRU00407"/>
    </source>
</evidence>
<evidence type="ECO:0000255" key="2">
    <source>
        <dbReference type="PROSITE-ProRule" id="PRU01189"/>
    </source>
</evidence>
<evidence type="ECO:0000305" key="3"/>
<proteinExistence type="evidence at transcript level"/>
<gene>
    <name type="primary">nhr-52</name>
    <name type="ORF">K06B4.2</name>
</gene>
<reference key="1">
    <citation type="journal article" date="2005" name="J. Mol. Evol.">
        <title>Explosive lineage-specific expansion of the orphan nuclear receptor HNF4 in nematodes.</title>
        <authorList>
            <person name="Robinson-Rechavi M."/>
            <person name="Maina C.V."/>
            <person name="Gissendanner C.R."/>
            <person name="Laudet V."/>
            <person name="Sluder A."/>
        </authorList>
    </citation>
    <scope>NUCLEOTIDE SEQUENCE [MRNA]</scope>
</reference>
<reference key="2">
    <citation type="journal article" date="1998" name="Science">
        <title>Genome sequence of the nematode C. elegans: a platform for investigating biology.</title>
        <authorList>
            <consortium name="The C. elegans sequencing consortium"/>
        </authorList>
    </citation>
    <scope>NUCLEOTIDE SEQUENCE [LARGE SCALE GENOMIC DNA]</scope>
    <source>
        <strain>Bristol N2</strain>
    </source>
</reference>
<organism>
    <name type="scientific">Caenorhabditis elegans</name>
    <dbReference type="NCBI Taxonomy" id="6239"/>
    <lineage>
        <taxon>Eukaryota</taxon>
        <taxon>Metazoa</taxon>
        <taxon>Ecdysozoa</taxon>
        <taxon>Nematoda</taxon>
        <taxon>Chromadorea</taxon>
        <taxon>Rhabditida</taxon>
        <taxon>Rhabditina</taxon>
        <taxon>Rhabditomorpha</taxon>
        <taxon>Rhabditoidea</taxon>
        <taxon>Rhabditidae</taxon>
        <taxon>Peloderinae</taxon>
        <taxon>Caenorhabditis</taxon>
    </lineage>
</organism>